<dbReference type="EC" id="2.3.1.15" evidence="1"/>
<dbReference type="EMBL" id="CP000094">
    <property type="protein sequence ID" value="ABA72827.1"/>
    <property type="molecule type" value="Genomic_DNA"/>
</dbReference>
<dbReference type="RefSeq" id="WP_011332667.1">
    <property type="nucleotide sequence ID" value="NC_007492.2"/>
</dbReference>
<dbReference type="SMR" id="Q3KHC9"/>
<dbReference type="KEGG" id="pfo:Pfl01_1084"/>
<dbReference type="eggNOG" id="COG2937">
    <property type="taxonomic scope" value="Bacteria"/>
</dbReference>
<dbReference type="HOGENOM" id="CLU_015407_0_0_6"/>
<dbReference type="UniPathway" id="UPA00557">
    <property type="reaction ID" value="UER00612"/>
</dbReference>
<dbReference type="Proteomes" id="UP000002704">
    <property type="component" value="Chromosome"/>
</dbReference>
<dbReference type="GO" id="GO:0005886">
    <property type="term" value="C:plasma membrane"/>
    <property type="evidence" value="ECO:0007669"/>
    <property type="project" value="UniProtKB-SubCell"/>
</dbReference>
<dbReference type="GO" id="GO:0004366">
    <property type="term" value="F:glycerol-3-phosphate O-acyltransferase activity"/>
    <property type="evidence" value="ECO:0007669"/>
    <property type="project" value="UniProtKB-UniRule"/>
</dbReference>
<dbReference type="GO" id="GO:0016024">
    <property type="term" value="P:CDP-diacylglycerol biosynthetic process"/>
    <property type="evidence" value="ECO:0007669"/>
    <property type="project" value="UniProtKB-UniRule"/>
</dbReference>
<dbReference type="GO" id="GO:0006631">
    <property type="term" value="P:fatty acid metabolic process"/>
    <property type="evidence" value="ECO:0007669"/>
    <property type="project" value="TreeGrafter"/>
</dbReference>
<dbReference type="CDD" id="cd07993">
    <property type="entry name" value="LPLAT_DHAPAT-like"/>
    <property type="match status" value="1"/>
</dbReference>
<dbReference type="HAMAP" id="MF_00393">
    <property type="entry name" value="Glyc3P_acyltrans"/>
    <property type="match status" value="1"/>
</dbReference>
<dbReference type="InterPro" id="IPR022284">
    <property type="entry name" value="GPAT/DHAPAT"/>
</dbReference>
<dbReference type="InterPro" id="IPR045520">
    <property type="entry name" value="GPAT/DHAPAT_C"/>
</dbReference>
<dbReference type="InterPro" id="IPR041728">
    <property type="entry name" value="GPAT/DHAPAT_LPLAT"/>
</dbReference>
<dbReference type="InterPro" id="IPR028354">
    <property type="entry name" value="GPAT_PlsB"/>
</dbReference>
<dbReference type="InterPro" id="IPR002123">
    <property type="entry name" value="Plipid/glycerol_acylTrfase"/>
</dbReference>
<dbReference type="NCBIfam" id="TIGR03703">
    <property type="entry name" value="plsB"/>
    <property type="match status" value="1"/>
</dbReference>
<dbReference type="NCBIfam" id="NF003441">
    <property type="entry name" value="PRK04974.1"/>
    <property type="match status" value="1"/>
</dbReference>
<dbReference type="PANTHER" id="PTHR12563:SF17">
    <property type="entry name" value="DIHYDROXYACETONE PHOSPHATE ACYLTRANSFERASE"/>
    <property type="match status" value="1"/>
</dbReference>
<dbReference type="PANTHER" id="PTHR12563">
    <property type="entry name" value="GLYCEROL-3-PHOSPHATE ACYLTRANSFERASE"/>
    <property type="match status" value="1"/>
</dbReference>
<dbReference type="Pfam" id="PF01553">
    <property type="entry name" value="Acyltransferase"/>
    <property type="match status" value="1"/>
</dbReference>
<dbReference type="Pfam" id="PF19277">
    <property type="entry name" value="GPAT_C"/>
    <property type="match status" value="1"/>
</dbReference>
<dbReference type="PIRSF" id="PIRSF500064">
    <property type="entry name" value="GPAT"/>
    <property type="match status" value="1"/>
</dbReference>
<dbReference type="PIRSF" id="PIRSF000437">
    <property type="entry name" value="GPAT_DHAPAT"/>
    <property type="match status" value="1"/>
</dbReference>
<dbReference type="SMART" id="SM00563">
    <property type="entry name" value="PlsC"/>
    <property type="match status" value="1"/>
</dbReference>
<dbReference type="SUPFAM" id="SSF69593">
    <property type="entry name" value="Glycerol-3-phosphate (1)-acyltransferase"/>
    <property type="match status" value="1"/>
</dbReference>
<sequence length="834" mass="94908">MTRSPFRRLVFGTLRRLLYLWVRSETINQSSFTLNLDRSRPVFYVLQNPSLTDLAVVDTECTKAGLPRPVLPVSVGSLIEPAAFFYLTPDPDWLGRQDKRGAPPTLTRLVSALSQNAAEDAQIIPVSVFWGQSPDSENSPWKLLFADSWAVTGRLRRLLSIMILGRKTRVQFSAPIHLRELIEHNKGHERTVRMAQRILRVHFRNLKAAVIGPDISHRRNLVKGLLNQPLVKQAILDEAERENISPEKAKAQALRYGNEIASDYTYTAIRFLEVVLSWFWNKIYDGIKVNHIEGVQKVAQGHEVIYVPCHRSHIDYLLLSYLLFRNGLTPPHIAAGINLNMPVIGSLLRRGGAFFMRRTFKGNPLYTSVFNEYLHTLFTKGFPVEYFVEGGRSRTGRMLQPKTGMLAITLRSFLRSSRMPIVFVPVYIGYERVLEGRTYLGELRGASKKKESIFDIFKVIGALKQRFGQVAVNFGEPIKLAEFLDSEQPGWRQQELGPQFKPAWLNETTNRLGEKVAQHLNEAAAINPVNLVALALLSTTRLALDDRAMARVLDLYLALLRKVPYSPHTTLPEGDGRALIEHVKDMDLLSEQNDALGKILYLDEQNAVLMTYYRNNVLHIFALPALLASFFQSTSRMSREQILRYTRALYPYLQSELFIRWTLDELDAVIDQWLEAFVEQGLLRFEKDVYLRPAPSSRHFVLLTLLSKSIAQTLQRFYMTVSLLLNSGQNSISAEELEDLCTVMAQRLSILHGLNAPEFFDKSLFRHFIQTLLDLDVLRRDEAGKLSYHELLGELAEGAAKRVLPAEIRLSIRQVALHRSEDAADQVAPPVQND</sequence>
<comment type="catalytic activity">
    <reaction evidence="1">
        <text>sn-glycerol 3-phosphate + an acyl-CoA = a 1-acyl-sn-glycero-3-phosphate + CoA</text>
        <dbReference type="Rhea" id="RHEA:15325"/>
        <dbReference type="ChEBI" id="CHEBI:57287"/>
        <dbReference type="ChEBI" id="CHEBI:57597"/>
        <dbReference type="ChEBI" id="CHEBI:57970"/>
        <dbReference type="ChEBI" id="CHEBI:58342"/>
        <dbReference type="EC" id="2.3.1.15"/>
    </reaction>
</comment>
<comment type="pathway">
    <text evidence="1">Phospholipid metabolism; CDP-diacylglycerol biosynthesis; CDP-diacylglycerol from sn-glycerol 3-phosphate: step 1/3.</text>
</comment>
<comment type="subcellular location">
    <subcellularLocation>
        <location evidence="1">Cell inner membrane</location>
        <topology evidence="1">Peripheral membrane protein</topology>
        <orientation evidence="1">Cytoplasmic side</orientation>
    </subcellularLocation>
</comment>
<comment type="domain">
    <text evidence="1">The HXXXXD motif is essential for acyltransferase activity and may constitute the binding site for the phosphate moiety of the glycerol-3-phosphate.</text>
</comment>
<comment type="similarity">
    <text evidence="1">Belongs to the GPAT/DAPAT family.</text>
</comment>
<feature type="chain" id="PRO_1000049449" description="Glycerol-3-phosphate acyltransferase">
    <location>
        <begin position="1"/>
        <end position="834"/>
    </location>
</feature>
<feature type="short sequence motif" description="HXXXXD motif">
    <location>
        <begin position="309"/>
        <end position="314"/>
    </location>
</feature>
<keyword id="KW-0012">Acyltransferase</keyword>
<keyword id="KW-0997">Cell inner membrane</keyword>
<keyword id="KW-1003">Cell membrane</keyword>
<keyword id="KW-0444">Lipid biosynthesis</keyword>
<keyword id="KW-0443">Lipid metabolism</keyword>
<keyword id="KW-0472">Membrane</keyword>
<keyword id="KW-0594">Phospholipid biosynthesis</keyword>
<keyword id="KW-1208">Phospholipid metabolism</keyword>
<keyword id="KW-0808">Transferase</keyword>
<name>PLSB_PSEPF</name>
<protein>
    <recommendedName>
        <fullName evidence="1">Glycerol-3-phosphate acyltransferase</fullName>
        <shortName evidence="1">GPAT</shortName>
        <ecNumber evidence="1">2.3.1.15</ecNumber>
    </recommendedName>
</protein>
<accession>Q3KHC9</accession>
<reference key="1">
    <citation type="journal article" date="2009" name="Genome Biol.">
        <title>Genomic and genetic analyses of diversity and plant interactions of Pseudomonas fluorescens.</title>
        <authorList>
            <person name="Silby M.W."/>
            <person name="Cerdeno-Tarraga A.M."/>
            <person name="Vernikos G.S."/>
            <person name="Giddens S.R."/>
            <person name="Jackson R.W."/>
            <person name="Preston G.M."/>
            <person name="Zhang X.-X."/>
            <person name="Moon C.D."/>
            <person name="Gehrig S.M."/>
            <person name="Godfrey S.A.C."/>
            <person name="Knight C.G."/>
            <person name="Malone J.G."/>
            <person name="Robinson Z."/>
            <person name="Spiers A.J."/>
            <person name="Harris S."/>
            <person name="Challis G.L."/>
            <person name="Yaxley A.M."/>
            <person name="Harris D."/>
            <person name="Seeger K."/>
            <person name="Murphy L."/>
            <person name="Rutter S."/>
            <person name="Squares R."/>
            <person name="Quail M.A."/>
            <person name="Saunders E."/>
            <person name="Mavromatis K."/>
            <person name="Brettin T.S."/>
            <person name="Bentley S.D."/>
            <person name="Hothersall J."/>
            <person name="Stephens E."/>
            <person name="Thomas C.M."/>
            <person name="Parkhill J."/>
            <person name="Levy S.B."/>
            <person name="Rainey P.B."/>
            <person name="Thomson N.R."/>
        </authorList>
    </citation>
    <scope>NUCLEOTIDE SEQUENCE [LARGE SCALE GENOMIC DNA]</scope>
    <source>
        <strain>Pf0-1</strain>
    </source>
</reference>
<organism>
    <name type="scientific">Pseudomonas fluorescens (strain Pf0-1)</name>
    <dbReference type="NCBI Taxonomy" id="205922"/>
    <lineage>
        <taxon>Bacteria</taxon>
        <taxon>Pseudomonadati</taxon>
        <taxon>Pseudomonadota</taxon>
        <taxon>Gammaproteobacteria</taxon>
        <taxon>Pseudomonadales</taxon>
        <taxon>Pseudomonadaceae</taxon>
        <taxon>Pseudomonas</taxon>
    </lineage>
</organism>
<proteinExistence type="inferred from homology"/>
<evidence type="ECO:0000255" key="1">
    <source>
        <dbReference type="HAMAP-Rule" id="MF_00393"/>
    </source>
</evidence>
<gene>
    <name evidence="1" type="primary">plsB</name>
    <name type="ordered locus">Pfl01_1084</name>
</gene>